<reference key="1">
    <citation type="journal article" date="2002" name="Proc. Natl. Acad. Sci. U.S.A.">
        <title>Complete genome sequence and comparative genomic analysis of an emerging human pathogen, serotype V Streptococcus agalactiae.</title>
        <authorList>
            <person name="Tettelin H."/>
            <person name="Masignani V."/>
            <person name="Cieslewicz M.J."/>
            <person name="Eisen J.A."/>
            <person name="Peterson S.N."/>
            <person name="Wessels M.R."/>
            <person name="Paulsen I.T."/>
            <person name="Nelson K.E."/>
            <person name="Margarit I."/>
            <person name="Read T.D."/>
            <person name="Madoff L.C."/>
            <person name="Wolf A.M."/>
            <person name="Beanan M.J."/>
            <person name="Brinkac L.M."/>
            <person name="Daugherty S.C."/>
            <person name="DeBoy R.T."/>
            <person name="Durkin A.S."/>
            <person name="Kolonay J.F."/>
            <person name="Madupu R."/>
            <person name="Lewis M.R."/>
            <person name="Radune D."/>
            <person name="Fedorova N.B."/>
            <person name="Scanlan D."/>
            <person name="Khouri H.M."/>
            <person name="Mulligan S."/>
            <person name="Carty H.A."/>
            <person name="Cline R.T."/>
            <person name="Van Aken S.E."/>
            <person name="Gill J."/>
            <person name="Scarselli M."/>
            <person name="Mora M."/>
            <person name="Iacobini E.T."/>
            <person name="Brettoni C."/>
            <person name="Galli G."/>
            <person name="Mariani M."/>
            <person name="Vegni F."/>
            <person name="Maione D."/>
            <person name="Rinaudo D."/>
            <person name="Rappuoli R."/>
            <person name="Telford J.L."/>
            <person name="Kasper D.L."/>
            <person name="Grandi G."/>
            <person name="Fraser C.M."/>
        </authorList>
    </citation>
    <scope>NUCLEOTIDE SEQUENCE [LARGE SCALE GENOMIC DNA]</scope>
    <source>
        <strain>ATCC BAA-611 / 2603 V/R</strain>
    </source>
</reference>
<proteinExistence type="inferred from homology"/>
<evidence type="ECO:0000255" key="1">
    <source>
        <dbReference type="HAMAP-Rule" id="MF_01511"/>
    </source>
</evidence>
<name>GUAC_STRA5</name>
<protein>
    <recommendedName>
        <fullName evidence="1">GMP reductase</fullName>
        <ecNumber evidence="1">1.7.1.7</ecNumber>
    </recommendedName>
    <alternativeName>
        <fullName evidence="1">Guanosine 5'-monophosphate oxidoreductase</fullName>
        <shortName evidence="1">Guanosine monophosphate reductase</shortName>
    </alternativeName>
</protein>
<dbReference type="EC" id="1.7.1.7" evidence="1"/>
<dbReference type="EMBL" id="AE009948">
    <property type="protein sequence ID" value="AAM99968.1"/>
    <property type="molecule type" value="Genomic_DNA"/>
</dbReference>
<dbReference type="RefSeq" id="NP_688096.1">
    <property type="nucleotide sequence ID" value="NC_004116.1"/>
</dbReference>
<dbReference type="RefSeq" id="WP_000481328.1">
    <property type="nucleotide sequence ID" value="NC_004116.1"/>
</dbReference>
<dbReference type="SMR" id="Q8DZL4"/>
<dbReference type="STRING" id="208435.SAG1087"/>
<dbReference type="KEGG" id="sag:SAG1087"/>
<dbReference type="PATRIC" id="fig|208435.3.peg.1095"/>
<dbReference type="HOGENOM" id="CLU_022552_5_0_9"/>
<dbReference type="OrthoDB" id="9805398at2"/>
<dbReference type="Proteomes" id="UP000000821">
    <property type="component" value="Chromosome"/>
</dbReference>
<dbReference type="GO" id="GO:0005829">
    <property type="term" value="C:cytosol"/>
    <property type="evidence" value="ECO:0007669"/>
    <property type="project" value="TreeGrafter"/>
</dbReference>
<dbReference type="GO" id="GO:1902560">
    <property type="term" value="C:GMP reductase complex"/>
    <property type="evidence" value="ECO:0007669"/>
    <property type="project" value="InterPro"/>
</dbReference>
<dbReference type="GO" id="GO:0003920">
    <property type="term" value="F:GMP reductase activity"/>
    <property type="evidence" value="ECO:0007669"/>
    <property type="project" value="UniProtKB-UniRule"/>
</dbReference>
<dbReference type="GO" id="GO:0006163">
    <property type="term" value="P:purine nucleotide metabolic process"/>
    <property type="evidence" value="ECO:0007669"/>
    <property type="project" value="UniProtKB-UniRule"/>
</dbReference>
<dbReference type="CDD" id="cd00381">
    <property type="entry name" value="IMPDH"/>
    <property type="match status" value="1"/>
</dbReference>
<dbReference type="FunFam" id="3.20.20.70:FF:000424">
    <property type="entry name" value="Inosine-5'-monophosphate dehydrogenase 2"/>
    <property type="match status" value="1"/>
</dbReference>
<dbReference type="Gene3D" id="3.20.20.70">
    <property type="entry name" value="Aldolase class I"/>
    <property type="match status" value="1"/>
</dbReference>
<dbReference type="HAMAP" id="MF_01511">
    <property type="entry name" value="GMP_reduct_type2"/>
    <property type="match status" value="1"/>
</dbReference>
<dbReference type="InterPro" id="IPR013785">
    <property type="entry name" value="Aldolase_TIM"/>
</dbReference>
<dbReference type="InterPro" id="IPR050139">
    <property type="entry name" value="GMP_reductase"/>
</dbReference>
<dbReference type="InterPro" id="IPR005994">
    <property type="entry name" value="GuaC_type_2"/>
</dbReference>
<dbReference type="InterPro" id="IPR015875">
    <property type="entry name" value="IMP_DH/GMP_Rdtase_CS"/>
</dbReference>
<dbReference type="InterPro" id="IPR001093">
    <property type="entry name" value="IMP_DH_GMPRt"/>
</dbReference>
<dbReference type="NCBIfam" id="TIGR01306">
    <property type="entry name" value="GMP_reduct_2"/>
    <property type="match status" value="1"/>
</dbReference>
<dbReference type="NCBIfam" id="NF003966">
    <property type="entry name" value="PRK05458.1"/>
    <property type="match status" value="1"/>
</dbReference>
<dbReference type="PANTHER" id="PTHR43170">
    <property type="entry name" value="GMP REDUCTASE"/>
    <property type="match status" value="1"/>
</dbReference>
<dbReference type="PANTHER" id="PTHR43170:SF5">
    <property type="entry name" value="GMP REDUCTASE"/>
    <property type="match status" value="1"/>
</dbReference>
<dbReference type="Pfam" id="PF00478">
    <property type="entry name" value="IMPDH"/>
    <property type="match status" value="1"/>
</dbReference>
<dbReference type="PIRSF" id="PIRSF036500">
    <property type="entry name" value="GMP_red_Firmic"/>
    <property type="match status" value="1"/>
</dbReference>
<dbReference type="SMART" id="SM01240">
    <property type="entry name" value="IMPDH"/>
    <property type="match status" value="1"/>
</dbReference>
<dbReference type="SUPFAM" id="SSF51412">
    <property type="entry name" value="Inosine monophosphate dehydrogenase (IMPDH)"/>
    <property type="match status" value="1"/>
</dbReference>
<dbReference type="PROSITE" id="PS00487">
    <property type="entry name" value="IMP_DH_GMP_RED"/>
    <property type="match status" value="1"/>
</dbReference>
<keyword id="KW-0521">NADP</keyword>
<keyword id="KW-0560">Oxidoreductase</keyword>
<keyword id="KW-1185">Reference proteome</keyword>
<feature type="chain" id="PRO_0000093774" description="GMP reductase">
    <location>
        <begin position="1"/>
        <end position="327"/>
    </location>
</feature>
<feature type="active site" description="Thioimidate intermediate" evidence="1">
    <location>
        <position position="176"/>
    </location>
</feature>
<feature type="binding site" evidence="1">
    <location>
        <begin position="205"/>
        <end position="228"/>
    </location>
    <ligand>
        <name>NADP(+)</name>
        <dbReference type="ChEBI" id="CHEBI:58349"/>
    </ligand>
</feature>
<comment type="function">
    <text evidence="1">Catalyzes the irreversible NADPH-dependent deamination of GMP to IMP. It functions in the conversion of nucleobase, nucleoside and nucleotide derivatives of G to A nucleotides, and in maintaining the intracellular balance of A and G nucleotides.</text>
</comment>
<comment type="catalytic activity">
    <reaction evidence="1">
        <text>IMP + NH4(+) + NADP(+) = GMP + NADPH + 2 H(+)</text>
        <dbReference type="Rhea" id="RHEA:17185"/>
        <dbReference type="ChEBI" id="CHEBI:15378"/>
        <dbReference type="ChEBI" id="CHEBI:28938"/>
        <dbReference type="ChEBI" id="CHEBI:57783"/>
        <dbReference type="ChEBI" id="CHEBI:58053"/>
        <dbReference type="ChEBI" id="CHEBI:58115"/>
        <dbReference type="ChEBI" id="CHEBI:58349"/>
        <dbReference type="EC" id="1.7.1.7"/>
    </reaction>
</comment>
<comment type="similarity">
    <text evidence="1">Belongs to the IMPDH/GMPR family. GuaC type 2 subfamily.</text>
</comment>
<sequence length="327" mass="36192">MFNDIPVFDYEDIQLIPNKCIISSRSQADTSVKLGNYTFKLPVIPANMQTIIDEEVAETLACEGYFYIMHRFNEEERKPFIKRMHDKGLIASISVGVKDYEYDFVTSLKEDAPEFITIDIAHGHSNSVIEMIQHIKQELPETFVIAGNVGTPEAVRELENAGADATKVGIGPGKVCITKVKTGFGTGGWQLAALRWCSKAARKPIIADGGIRTHGDIAKSIRFGASMVMIGSLFAGHLESPGKLVEVEGQQFKEYYGSASEYQKGEHKNVEGKKILLPVKGRLEDTLTEMQQDLQSSISYAGGKELDSLRHVDYVIVKNSIWNGDSI</sequence>
<gene>
    <name evidence="1" type="primary">guaC</name>
    <name type="ordered locus">SAG1087</name>
</gene>
<organism>
    <name type="scientific">Streptococcus agalactiae serotype V (strain ATCC BAA-611 / 2603 V/R)</name>
    <dbReference type="NCBI Taxonomy" id="208435"/>
    <lineage>
        <taxon>Bacteria</taxon>
        <taxon>Bacillati</taxon>
        <taxon>Bacillota</taxon>
        <taxon>Bacilli</taxon>
        <taxon>Lactobacillales</taxon>
        <taxon>Streptococcaceae</taxon>
        <taxon>Streptococcus</taxon>
    </lineage>
</organism>
<accession>Q8DZL4</accession>